<evidence type="ECO:0000255" key="1">
    <source>
        <dbReference type="HAMAP-Rule" id="MF_01974"/>
    </source>
</evidence>
<accession>Q9ZJT0</accession>
<name>MAP1_HELPJ</name>
<feature type="chain" id="PRO_0000148942" description="Methionine aminopeptidase">
    <location>
        <begin position="1"/>
        <end position="253"/>
    </location>
</feature>
<feature type="binding site" evidence="1">
    <location>
        <position position="78"/>
    </location>
    <ligand>
        <name>substrate</name>
    </ligand>
</feature>
<feature type="binding site" evidence="1">
    <location>
        <position position="95"/>
    </location>
    <ligand>
        <name>a divalent metal cation</name>
        <dbReference type="ChEBI" id="CHEBI:60240"/>
        <label>1</label>
    </ligand>
</feature>
<feature type="binding site" evidence="1">
    <location>
        <position position="106"/>
    </location>
    <ligand>
        <name>a divalent metal cation</name>
        <dbReference type="ChEBI" id="CHEBI:60240"/>
        <label>1</label>
    </ligand>
</feature>
<feature type="binding site" evidence="1">
    <location>
        <position position="106"/>
    </location>
    <ligand>
        <name>a divalent metal cation</name>
        <dbReference type="ChEBI" id="CHEBI:60240"/>
        <label>2</label>
        <note>catalytic</note>
    </ligand>
</feature>
<feature type="binding site" evidence="1">
    <location>
        <position position="169"/>
    </location>
    <ligand>
        <name>a divalent metal cation</name>
        <dbReference type="ChEBI" id="CHEBI:60240"/>
        <label>2</label>
        <note>catalytic</note>
    </ligand>
</feature>
<feature type="binding site" evidence="1">
    <location>
        <position position="176"/>
    </location>
    <ligand>
        <name>substrate</name>
    </ligand>
</feature>
<feature type="binding site" evidence="1">
    <location>
        <position position="206"/>
    </location>
    <ligand>
        <name>a divalent metal cation</name>
        <dbReference type="ChEBI" id="CHEBI:60240"/>
        <label>2</label>
        <note>catalytic</note>
    </ligand>
</feature>
<feature type="binding site" evidence="1">
    <location>
        <position position="237"/>
    </location>
    <ligand>
        <name>a divalent metal cation</name>
        <dbReference type="ChEBI" id="CHEBI:60240"/>
        <label>1</label>
    </ligand>
</feature>
<feature type="binding site" evidence="1">
    <location>
        <position position="237"/>
    </location>
    <ligand>
        <name>a divalent metal cation</name>
        <dbReference type="ChEBI" id="CHEBI:60240"/>
        <label>2</label>
        <note>catalytic</note>
    </ligand>
</feature>
<keyword id="KW-0031">Aminopeptidase</keyword>
<keyword id="KW-0378">Hydrolase</keyword>
<keyword id="KW-0479">Metal-binding</keyword>
<keyword id="KW-0645">Protease</keyword>
<protein>
    <recommendedName>
        <fullName evidence="1">Methionine aminopeptidase</fullName>
        <shortName evidence="1">MAP</shortName>
        <shortName evidence="1">MetAP</shortName>
        <ecNumber evidence="1">3.4.11.18</ecNumber>
    </recommendedName>
    <alternativeName>
        <fullName evidence="1">Peptidase M</fullName>
    </alternativeName>
</protein>
<organism>
    <name type="scientific">Helicobacter pylori (strain J99 / ATCC 700824)</name>
    <name type="common">Campylobacter pylori J99</name>
    <dbReference type="NCBI Taxonomy" id="85963"/>
    <lineage>
        <taxon>Bacteria</taxon>
        <taxon>Pseudomonadati</taxon>
        <taxon>Campylobacterota</taxon>
        <taxon>Epsilonproteobacteria</taxon>
        <taxon>Campylobacterales</taxon>
        <taxon>Helicobacteraceae</taxon>
        <taxon>Helicobacter</taxon>
    </lineage>
</organism>
<sequence length="253" mass="27464">MAISIKSPKEIKALRKAGELTAQALALLEREVRPGVSLLELDKMAEDFIKSSHARPAFKGLYGFPNSVCMSLNEVVIHGIPTDYVLQEGDIIGLDLGVEVDGYYGDSALTLPIGAISPQDEKLLACSKESLMHAISSIRVGMHFKELSQILEGAITERGFVPLKGFCGHGIGKKPHEEPEIPNYLEKGVKANSGPKIKEGMVFCLEPMVCQKQGEPKILADKWSVVSVDGLNTSHHEHTIAIVGNKAVILTER</sequence>
<comment type="function">
    <text evidence="1">Removes the N-terminal methionine from nascent proteins. The N-terminal methionine is often cleaved when the second residue in the primary sequence is small and uncharged (Met-Ala-, Cys, Gly, Pro, Ser, Thr, or Val). Requires deformylation of the N(alpha)-formylated initiator methionine before it can be hydrolyzed.</text>
</comment>
<comment type="catalytic activity">
    <reaction evidence="1">
        <text>Release of N-terminal amino acids, preferentially methionine, from peptides and arylamides.</text>
        <dbReference type="EC" id="3.4.11.18"/>
    </reaction>
</comment>
<comment type="cofactor">
    <cofactor evidence="1">
        <name>Co(2+)</name>
        <dbReference type="ChEBI" id="CHEBI:48828"/>
    </cofactor>
    <cofactor evidence="1">
        <name>Zn(2+)</name>
        <dbReference type="ChEBI" id="CHEBI:29105"/>
    </cofactor>
    <cofactor evidence="1">
        <name>Mn(2+)</name>
        <dbReference type="ChEBI" id="CHEBI:29035"/>
    </cofactor>
    <cofactor evidence="1">
        <name>Fe(2+)</name>
        <dbReference type="ChEBI" id="CHEBI:29033"/>
    </cofactor>
    <text evidence="1">Binds 2 divalent metal cations per subunit. Has a high-affinity and a low affinity metal-binding site. The true nature of the physiological cofactor is under debate. The enzyme is active with cobalt, zinc, manganese or divalent iron ions. Most likely, methionine aminopeptidases function as mononuclear Fe(2+)-metalloproteases under physiological conditions, and the catalytically relevant metal-binding site has been assigned to the histidine-containing high-affinity site.</text>
</comment>
<comment type="subunit">
    <text evidence="1">Monomer.</text>
</comment>
<comment type="similarity">
    <text evidence="1">Belongs to the peptidase M24A family. Methionine aminopeptidase type 1 subfamily.</text>
</comment>
<dbReference type="EC" id="3.4.11.18" evidence="1"/>
<dbReference type="EMBL" id="AE001439">
    <property type="protein sequence ID" value="AAD06803.1"/>
    <property type="molecule type" value="Genomic_DNA"/>
</dbReference>
<dbReference type="PIR" id="C71833">
    <property type="entry name" value="C71833"/>
</dbReference>
<dbReference type="RefSeq" id="WP_001018132.1">
    <property type="nucleotide sequence ID" value="NZ_CP011330.1"/>
</dbReference>
<dbReference type="SMR" id="Q9ZJT0"/>
<dbReference type="KEGG" id="hpj:jhp_1219"/>
<dbReference type="PATRIC" id="fig|85963.30.peg.1352"/>
<dbReference type="eggNOG" id="COG0024">
    <property type="taxonomic scope" value="Bacteria"/>
</dbReference>
<dbReference type="Proteomes" id="UP000000804">
    <property type="component" value="Chromosome"/>
</dbReference>
<dbReference type="GO" id="GO:0005829">
    <property type="term" value="C:cytosol"/>
    <property type="evidence" value="ECO:0007669"/>
    <property type="project" value="TreeGrafter"/>
</dbReference>
<dbReference type="GO" id="GO:0004239">
    <property type="term" value="F:initiator methionyl aminopeptidase activity"/>
    <property type="evidence" value="ECO:0007669"/>
    <property type="project" value="UniProtKB-UniRule"/>
</dbReference>
<dbReference type="GO" id="GO:0046872">
    <property type="term" value="F:metal ion binding"/>
    <property type="evidence" value="ECO:0007669"/>
    <property type="project" value="UniProtKB-UniRule"/>
</dbReference>
<dbReference type="GO" id="GO:0070006">
    <property type="term" value="F:metalloaminopeptidase activity"/>
    <property type="evidence" value="ECO:0007669"/>
    <property type="project" value="UniProtKB-UniRule"/>
</dbReference>
<dbReference type="GO" id="GO:0006508">
    <property type="term" value="P:proteolysis"/>
    <property type="evidence" value="ECO:0007669"/>
    <property type="project" value="UniProtKB-KW"/>
</dbReference>
<dbReference type="CDD" id="cd01086">
    <property type="entry name" value="MetAP1"/>
    <property type="match status" value="1"/>
</dbReference>
<dbReference type="Gene3D" id="3.90.230.10">
    <property type="entry name" value="Creatinase/methionine aminopeptidase superfamily"/>
    <property type="match status" value="1"/>
</dbReference>
<dbReference type="HAMAP" id="MF_01974">
    <property type="entry name" value="MetAP_1"/>
    <property type="match status" value="1"/>
</dbReference>
<dbReference type="InterPro" id="IPR036005">
    <property type="entry name" value="Creatinase/aminopeptidase-like"/>
</dbReference>
<dbReference type="InterPro" id="IPR000994">
    <property type="entry name" value="Pept_M24"/>
</dbReference>
<dbReference type="InterPro" id="IPR001714">
    <property type="entry name" value="Pept_M24_MAP"/>
</dbReference>
<dbReference type="InterPro" id="IPR002467">
    <property type="entry name" value="Pept_M24A_MAP1"/>
</dbReference>
<dbReference type="NCBIfam" id="TIGR00500">
    <property type="entry name" value="met_pdase_I"/>
    <property type="match status" value="1"/>
</dbReference>
<dbReference type="PANTHER" id="PTHR43330">
    <property type="entry name" value="METHIONINE AMINOPEPTIDASE"/>
    <property type="match status" value="1"/>
</dbReference>
<dbReference type="PANTHER" id="PTHR43330:SF27">
    <property type="entry name" value="METHIONINE AMINOPEPTIDASE"/>
    <property type="match status" value="1"/>
</dbReference>
<dbReference type="Pfam" id="PF00557">
    <property type="entry name" value="Peptidase_M24"/>
    <property type="match status" value="1"/>
</dbReference>
<dbReference type="PRINTS" id="PR00599">
    <property type="entry name" value="MAPEPTIDASE"/>
</dbReference>
<dbReference type="SUPFAM" id="SSF55920">
    <property type="entry name" value="Creatinase/aminopeptidase"/>
    <property type="match status" value="1"/>
</dbReference>
<dbReference type="PROSITE" id="PS00680">
    <property type="entry name" value="MAP_1"/>
    <property type="match status" value="1"/>
</dbReference>
<gene>
    <name evidence="1" type="primary">map</name>
    <name type="ordered locus">jhp_1219</name>
</gene>
<reference key="1">
    <citation type="journal article" date="1999" name="Nature">
        <title>Genomic sequence comparison of two unrelated isolates of the human gastric pathogen Helicobacter pylori.</title>
        <authorList>
            <person name="Alm R.A."/>
            <person name="Ling L.-S.L."/>
            <person name="Moir D.T."/>
            <person name="King B.L."/>
            <person name="Brown E.D."/>
            <person name="Doig P.C."/>
            <person name="Smith D.R."/>
            <person name="Noonan B."/>
            <person name="Guild B.C."/>
            <person name="deJonge B.L."/>
            <person name="Carmel G."/>
            <person name="Tummino P.J."/>
            <person name="Caruso A."/>
            <person name="Uria-Nickelsen M."/>
            <person name="Mills D.M."/>
            <person name="Ives C."/>
            <person name="Gibson R."/>
            <person name="Merberg D."/>
            <person name="Mills S.D."/>
            <person name="Jiang Q."/>
            <person name="Taylor D.E."/>
            <person name="Vovis G.F."/>
            <person name="Trust T.J."/>
        </authorList>
    </citation>
    <scope>NUCLEOTIDE SEQUENCE [LARGE SCALE GENOMIC DNA]</scope>
    <source>
        <strain>J99 / ATCC 700824</strain>
    </source>
</reference>
<proteinExistence type="inferred from homology"/>